<sequence length="1044" mass="115360">MAAPGRLLLRPRPGGLLLLLPGLLLPLADAFNLDVESPAEYAGPEGSYFGFAVDFFEPSTSSRMFLLVGAPKANTTQPGIVEGGQVLKCECSSSRRCQPIEFDSTGNRDYAKDDPLEFKSHQWFGASVRSKQDKILACAPLYHWRTEMKQEREPVGTCFLQDGTKTVEYAPCRSKNIDADGQGFCQGGFSIDFTKADRVLLGGPGSFYWQGQLISDQVAEIISKYDPNVYSIKYNNQLATRTAQAIFDDSYLGYSVAVGDFNGDGIEDFVSGVPRAARTLGMVYIYDGKNMSSLHNFTGEQMAAYFGFSVAATDINGDDYADVFIGAPLFMDRGSDGKLQEVGQVSVSLQRAVGDFQTTKLNGFEVFARFGSAIAPLGDLDQDGFNDIAIAAPYGGEDKKGLVYIFNGRSTGLNSVPSQILEGQWAAQSMPPSFGYSMKGATDVDRNGYPDLVVGAFGVDRAVLYRARPVVTVNAGLEVYPSILNQDNKICPLPGTALKVSCFNVRFCLKADGKGTLPRKLHFQVELLLDKLKQKGAIRRALFLHNRSPVHSKTMTVFRGGQMQCEELVAYLRDESEFRDKLTPITIFMEYRLDQRTAADATGLQPILNQFTPANVSRQAHILLDCGEDNVCKPKLEVSVNSDQKKIYIGDDNPLTLTVKAQNQGEGAYEAELIVSIPPQADFIGVVRNNEALARLSCAFKTENQTRQVVCDLGNPMKAGTQLLAGLRFSVHQQSEMDTSVKFDLKIQSSNSFDNVSPVVSYKVDLAVLAAVEIRGVSSPDHIFLPIPNWEYKENPETEEDVGPIVQHIYELRNNGPSSFSKAILNLQWPYKYNNNTLLYILHYDIDGPMNCTADTEINPLRIKTPEKNDTAAAGQGERNHLITKRDLTLREGDVHTLGCGIAKCLQITCQVGRLDRGKSAILYVKSLLWTETFMNKENQNHSYSLKSSASFNIIEFPYKNLPIEDLFNSTLVTTNITWGIQPAPMPVPVWVIILAVLAGLLLLAVLVFVMYRMGFFKRVRPPQEEQEREQLQPHENGEGNSET</sequence>
<dbReference type="EMBL" id="U14135">
    <property type="protein sequence ID" value="AAC52497.1"/>
    <property type="molecule type" value="mRNA"/>
</dbReference>
<dbReference type="EMBL" id="AL772301">
    <property type="status" value="NOT_ANNOTATED_CDS"/>
    <property type="molecule type" value="Genomic_DNA"/>
</dbReference>
<dbReference type="CCDS" id="CCDS16181.1"/>
<dbReference type="PIR" id="T10050">
    <property type="entry name" value="T10050"/>
</dbReference>
<dbReference type="RefSeq" id="NP_032428.2">
    <property type="nucleotide sequence ID" value="NM_008402.4"/>
</dbReference>
<dbReference type="SMR" id="P43406"/>
<dbReference type="BioGRID" id="200824">
    <property type="interactions" value="4"/>
</dbReference>
<dbReference type="ComplexPortal" id="CPX-3035">
    <property type="entry name" value="Integrin alphav-beta3 complex"/>
</dbReference>
<dbReference type="ComplexPortal" id="CPX-3130">
    <property type="entry name" value="Integrin alphav-beta1 complex"/>
</dbReference>
<dbReference type="ComplexPortal" id="CPX-3131">
    <property type="entry name" value="Integrin alphav-beta5 complex"/>
</dbReference>
<dbReference type="ComplexPortal" id="CPX-3132">
    <property type="entry name" value="Integrin alphav-beta6 complex"/>
</dbReference>
<dbReference type="ComplexPortal" id="CPX-3133">
    <property type="entry name" value="Integrin alphav-beta8 complex"/>
</dbReference>
<dbReference type="CORUM" id="P43406"/>
<dbReference type="FunCoup" id="P43406">
    <property type="interactions" value="2064"/>
</dbReference>
<dbReference type="IntAct" id="P43406">
    <property type="interactions" value="3"/>
</dbReference>
<dbReference type="STRING" id="10090.ENSMUSP00000028499"/>
<dbReference type="BindingDB" id="P43406"/>
<dbReference type="ChEMBL" id="CHEMBL3430891"/>
<dbReference type="ChEMBL" id="CHEMBL4523628"/>
<dbReference type="GlyConnect" id="2402">
    <property type="glycosylation" value="13 N-Linked glycans (5 sites)"/>
</dbReference>
<dbReference type="GlyCosmos" id="P43406">
    <property type="glycosylation" value="12 sites, 13 glycans"/>
</dbReference>
<dbReference type="GlyGen" id="P43406">
    <property type="glycosylation" value="14 sites, 20 N-linked glycans (9 sites), 1 O-linked glycan (1 site)"/>
</dbReference>
<dbReference type="iPTMnet" id="P43406"/>
<dbReference type="PhosphoSitePlus" id="P43406"/>
<dbReference type="SwissPalm" id="P43406"/>
<dbReference type="jPOST" id="P43406"/>
<dbReference type="PaxDb" id="10090-ENSMUSP00000028499"/>
<dbReference type="PeptideAtlas" id="P43406"/>
<dbReference type="ProteomicsDB" id="268896"/>
<dbReference type="Pumba" id="P43406"/>
<dbReference type="ABCD" id="P43406">
    <property type="antibodies" value="12 sequenced antibodies"/>
</dbReference>
<dbReference type="Antibodypedia" id="1498">
    <property type="antibodies" value="1496 antibodies from 49 providers"/>
</dbReference>
<dbReference type="DNASU" id="16410"/>
<dbReference type="Ensembl" id="ENSMUST00000028499.11">
    <property type="protein sequence ID" value="ENSMUSP00000028499.5"/>
    <property type="gene ID" value="ENSMUSG00000027087.12"/>
</dbReference>
<dbReference type="GeneID" id="16410"/>
<dbReference type="KEGG" id="mmu:16410"/>
<dbReference type="UCSC" id="uc008kid.2">
    <property type="organism name" value="mouse"/>
</dbReference>
<dbReference type="AGR" id="MGI:96608"/>
<dbReference type="CTD" id="3685"/>
<dbReference type="MGI" id="MGI:96608">
    <property type="gene designation" value="Itgav"/>
</dbReference>
<dbReference type="VEuPathDB" id="HostDB:ENSMUSG00000027087"/>
<dbReference type="eggNOG" id="KOG3637">
    <property type="taxonomic scope" value="Eukaryota"/>
</dbReference>
<dbReference type="GeneTree" id="ENSGT00940000158361"/>
<dbReference type="HOGENOM" id="CLU_004111_4_0_1"/>
<dbReference type="InParanoid" id="P43406"/>
<dbReference type="OMA" id="QVPCMLL"/>
<dbReference type="OrthoDB" id="5317514at2759"/>
<dbReference type="PhylomeDB" id="P43406"/>
<dbReference type="TreeFam" id="TF105391"/>
<dbReference type="Reactome" id="R-MMU-1236973">
    <property type="pathway name" value="Cross-presentation of particulate exogenous antigens (phagosomes)"/>
</dbReference>
<dbReference type="Reactome" id="R-MMU-1566948">
    <property type="pathway name" value="Elastic fibre formation"/>
</dbReference>
<dbReference type="Reactome" id="R-MMU-210990">
    <property type="pathway name" value="PECAM1 interactions"/>
</dbReference>
<dbReference type="Reactome" id="R-MMU-2129379">
    <property type="pathway name" value="Molecules associated with elastic fibres"/>
</dbReference>
<dbReference type="Reactome" id="R-MMU-216083">
    <property type="pathway name" value="Integrin cell surface interactions"/>
</dbReference>
<dbReference type="Reactome" id="R-MMU-2173789">
    <property type="pathway name" value="TGF-beta receptor signaling activates SMADs"/>
</dbReference>
<dbReference type="Reactome" id="R-MMU-3000170">
    <property type="pathway name" value="Syndecan interactions"/>
</dbReference>
<dbReference type="Reactome" id="R-MMU-3000178">
    <property type="pathway name" value="ECM proteoglycans"/>
</dbReference>
<dbReference type="Reactome" id="R-MMU-4420097">
    <property type="pathway name" value="VEGFA-VEGFR2 Pathway"/>
</dbReference>
<dbReference type="Reactome" id="R-MMU-445144">
    <property type="pathway name" value="Signal transduction by L1"/>
</dbReference>
<dbReference type="Reactome" id="R-MMU-6798695">
    <property type="pathway name" value="Neutrophil degranulation"/>
</dbReference>
<dbReference type="Reactome" id="R-MMU-9860927">
    <property type="pathway name" value="Turbulent (oscillatory, disturbed) flow shear stress activates signaling by PIEZO1 and integrins in endothelial cells"/>
</dbReference>
<dbReference type="BioGRID-ORCS" id="16410">
    <property type="hits" value="18 hits in 82 CRISPR screens"/>
</dbReference>
<dbReference type="ChiTaRS" id="Itgav">
    <property type="organism name" value="mouse"/>
</dbReference>
<dbReference type="PRO" id="PR:P43406"/>
<dbReference type="Proteomes" id="UP000000589">
    <property type="component" value="Chromosome 2"/>
</dbReference>
<dbReference type="RNAct" id="P43406">
    <property type="molecule type" value="protein"/>
</dbReference>
<dbReference type="Bgee" id="ENSMUSG00000027087">
    <property type="expression patterns" value="Expressed in cumulus cell and 282 other cell types or tissues"/>
</dbReference>
<dbReference type="ExpressionAtlas" id="P43406">
    <property type="expression patterns" value="baseline and differential"/>
</dbReference>
<dbReference type="GO" id="GO:0035868">
    <property type="term" value="C:alphav-beta3 integrin-HMGB1 complex"/>
    <property type="evidence" value="ECO:0007669"/>
    <property type="project" value="Ensembl"/>
</dbReference>
<dbReference type="GO" id="GO:0035867">
    <property type="term" value="C:alphav-beta3 integrin-IGF-1-IGF1R complex"/>
    <property type="evidence" value="ECO:0007669"/>
    <property type="project" value="Ensembl"/>
</dbReference>
<dbReference type="GO" id="GO:0009986">
    <property type="term" value="C:cell surface"/>
    <property type="evidence" value="ECO:0000250"/>
    <property type="project" value="BHF-UCL"/>
</dbReference>
<dbReference type="GO" id="GO:0005829">
    <property type="term" value="C:cytosol"/>
    <property type="evidence" value="ECO:0007669"/>
    <property type="project" value="Ensembl"/>
</dbReference>
<dbReference type="GO" id="GO:0009897">
    <property type="term" value="C:external side of plasma membrane"/>
    <property type="evidence" value="ECO:0000314"/>
    <property type="project" value="MGI"/>
</dbReference>
<dbReference type="GO" id="GO:0031527">
    <property type="term" value="C:filopodium membrane"/>
    <property type="evidence" value="ECO:0007669"/>
    <property type="project" value="Ensembl"/>
</dbReference>
<dbReference type="GO" id="GO:0005925">
    <property type="term" value="C:focal adhesion"/>
    <property type="evidence" value="ECO:0000250"/>
    <property type="project" value="UniProtKB"/>
</dbReference>
<dbReference type="GO" id="GO:0034682">
    <property type="term" value="C:integrin alphav-beta1 complex"/>
    <property type="evidence" value="ECO:0007669"/>
    <property type="project" value="Ensembl"/>
</dbReference>
<dbReference type="GO" id="GO:0034683">
    <property type="term" value="C:integrin alphav-beta3 complex"/>
    <property type="evidence" value="ECO:0000304"/>
    <property type="project" value="BHF-UCL"/>
</dbReference>
<dbReference type="GO" id="GO:0034684">
    <property type="term" value="C:integrin alphav-beta5 complex"/>
    <property type="evidence" value="ECO:0000314"/>
    <property type="project" value="BHF-UCL"/>
</dbReference>
<dbReference type="GO" id="GO:0034685">
    <property type="term" value="C:integrin alphav-beta6 complex"/>
    <property type="evidence" value="ECO:0000314"/>
    <property type="project" value="CAFA"/>
</dbReference>
<dbReference type="GO" id="GO:0034686">
    <property type="term" value="C:integrin alphav-beta8 complex"/>
    <property type="evidence" value="ECO:0000250"/>
    <property type="project" value="UniProtKB"/>
</dbReference>
<dbReference type="GO" id="GO:0008305">
    <property type="term" value="C:integrin complex"/>
    <property type="evidence" value="ECO:0000250"/>
    <property type="project" value="BHF-UCL"/>
</dbReference>
<dbReference type="GO" id="GO:0031258">
    <property type="term" value="C:lamellipodium membrane"/>
    <property type="evidence" value="ECO:0007669"/>
    <property type="project" value="Ensembl"/>
</dbReference>
<dbReference type="GO" id="GO:0016020">
    <property type="term" value="C:membrane"/>
    <property type="evidence" value="ECO:0000314"/>
    <property type="project" value="BHF-UCL"/>
</dbReference>
<dbReference type="GO" id="GO:0031528">
    <property type="term" value="C:microvillus membrane"/>
    <property type="evidence" value="ECO:0007669"/>
    <property type="project" value="Ensembl"/>
</dbReference>
<dbReference type="GO" id="GO:0005886">
    <property type="term" value="C:plasma membrane"/>
    <property type="evidence" value="ECO:0000314"/>
    <property type="project" value="MGI"/>
</dbReference>
<dbReference type="GO" id="GO:0032587">
    <property type="term" value="C:ruffle membrane"/>
    <property type="evidence" value="ECO:0007669"/>
    <property type="project" value="Ensembl"/>
</dbReference>
<dbReference type="GO" id="GO:0019960">
    <property type="term" value="F:C-X3-C chemokine binding"/>
    <property type="evidence" value="ECO:0007669"/>
    <property type="project" value="Ensembl"/>
</dbReference>
<dbReference type="GO" id="GO:0050840">
    <property type="term" value="F:extracellular matrix binding"/>
    <property type="evidence" value="ECO:0007669"/>
    <property type="project" value="Ensembl"/>
</dbReference>
<dbReference type="GO" id="GO:1990430">
    <property type="term" value="F:extracellular matrix protein binding"/>
    <property type="evidence" value="ECO:0007669"/>
    <property type="project" value="Ensembl"/>
</dbReference>
<dbReference type="GO" id="GO:0017134">
    <property type="term" value="F:fibroblast growth factor binding"/>
    <property type="evidence" value="ECO:0007669"/>
    <property type="project" value="Ensembl"/>
</dbReference>
<dbReference type="GO" id="GO:0001968">
    <property type="term" value="F:fibronectin binding"/>
    <property type="evidence" value="ECO:0007669"/>
    <property type="project" value="Ensembl"/>
</dbReference>
<dbReference type="GO" id="GO:0031994">
    <property type="term" value="F:insulin-like growth factor I binding"/>
    <property type="evidence" value="ECO:0007669"/>
    <property type="project" value="Ensembl"/>
</dbReference>
<dbReference type="GO" id="GO:0005178">
    <property type="term" value="F:integrin binding"/>
    <property type="evidence" value="ECO:0000353"/>
    <property type="project" value="BHF-UCL"/>
</dbReference>
<dbReference type="GO" id="GO:0046872">
    <property type="term" value="F:metal ion binding"/>
    <property type="evidence" value="ECO:0007669"/>
    <property type="project" value="UniProtKB-KW"/>
</dbReference>
<dbReference type="GO" id="GO:0038132">
    <property type="term" value="F:neuregulin binding"/>
    <property type="evidence" value="ECO:0007669"/>
    <property type="project" value="Ensembl"/>
</dbReference>
<dbReference type="GO" id="GO:0002020">
    <property type="term" value="F:protease binding"/>
    <property type="evidence" value="ECO:0007669"/>
    <property type="project" value="Ensembl"/>
</dbReference>
<dbReference type="GO" id="GO:0050431">
    <property type="term" value="F:transforming growth factor beta binding"/>
    <property type="evidence" value="ECO:0000250"/>
    <property type="project" value="BHF-UCL"/>
</dbReference>
<dbReference type="GO" id="GO:0005245">
    <property type="term" value="F:voltage-gated calcium channel activity"/>
    <property type="evidence" value="ECO:0007669"/>
    <property type="project" value="Ensembl"/>
</dbReference>
<dbReference type="GO" id="GO:0001525">
    <property type="term" value="P:angiogenesis"/>
    <property type="evidence" value="ECO:0007669"/>
    <property type="project" value="UniProtKB-KW"/>
</dbReference>
<dbReference type="GO" id="GO:0038027">
    <property type="term" value="P:apolipoprotein A-I-mediated signaling pathway"/>
    <property type="evidence" value="ECO:0007669"/>
    <property type="project" value="Ensembl"/>
</dbReference>
<dbReference type="GO" id="GO:0043277">
    <property type="term" value="P:apoptotic cell clearance"/>
    <property type="evidence" value="ECO:0000314"/>
    <property type="project" value="BHF-UCL"/>
</dbReference>
<dbReference type="GO" id="GO:0001568">
    <property type="term" value="P:blood vessel development"/>
    <property type="evidence" value="ECO:0000315"/>
    <property type="project" value="MGI"/>
</dbReference>
<dbReference type="GO" id="GO:0007155">
    <property type="term" value="P:cell adhesion"/>
    <property type="evidence" value="ECO:0000250"/>
    <property type="project" value="BHF-UCL"/>
</dbReference>
<dbReference type="GO" id="GO:0033627">
    <property type="term" value="P:cell adhesion mediated by integrin"/>
    <property type="evidence" value="ECO:0000314"/>
    <property type="project" value="CAFA"/>
</dbReference>
<dbReference type="GO" id="GO:0007160">
    <property type="term" value="P:cell-matrix adhesion"/>
    <property type="evidence" value="ECO:0000304"/>
    <property type="project" value="BHF-UCL"/>
</dbReference>
<dbReference type="GO" id="GO:0032490">
    <property type="term" value="P:detection of molecule of bacterial origin"/>
    <property type="evidence" value="ECO:0000304"/>
    <property type="project" value="BHF-UCL"/>
</dbReference>
<dbReference type="GO" id="GO:0035987">
    <property type="term" value="P:endodermal cell differentiation"/>
    <property type="evidence" value="ECO:0007669"/>
    <property type="project" value="Ensembl"/>
</dbReference>
<dbReference type="GO" id="GO:0043542">
    <property type="term" value="P:endothelial cell migration"/>
    <property type="evidence" value="ECO:0000304"/>
    <property type="project" value="BHF-UCL"/>
</dbReference>
<dbReference type="GO" id="GO:0070371">
    <property type="term" value="P:ERK1 and ERK2 cascade"/>
    <property type="evidence" value="ECO:0000314"/>
    <property type="project" value="BHF-UCL"/>
</dbReference>
<dbReference type="GO" id="GO:0097192">
    <property type="term" value="P:extrinsic apoptotic signaling pathway in absence of ligand"/>
    <property type="evidence" value="ECO:0000314"/>
    <property type="project" value="BHF-UCL"/>
</dbReference>
<dbReference type="GO" id="GO:0009566">
    <property type="term" value="P:fertilization"/>
    <property type="evidence" value="ECO:0000303"/>
    <property type="project" value="BHF-UCL"/>
</dbReference>
<dbReference type="GO" id="GO:0048041">
    <property type="term" value="P:focal adhesion assembly"/>
    <property type="evidence" value="ECO:0000303"/>
    <property type="project" value="BHF-UCL"/>
</dbReference>
<dbReference type="GO" id="GO:0035262">
    <property type="term" value="P:gonad morphogenesis"/>
    <property type="evidence" value="ECO:0000303"/>
    <property type="project" value="BHF-UCL"/>
</dbReference>
<dbReference type="GO" id="GO:0034113">
    <property type="term" value="P:heterotypic cell-cell adhesion"/>
    <property type="evidence" value="ECO:0007669"/>
    <property type="project" value="Ensembl"/>
</dbReference>
<dbReference type="GO" id="GO:0006954">
    <property type="term" value="P:inflammatory response"/>
    <property type="evidence" value="ECO:0000304"/>
    <property type="project" value="BHF-UCL"/>
</dbReference>
<dbReference type="GO" id="GO:0007229">
    <property type="term" value="P:integrin-mediated signaling pathway"/>
    <property type="evidence" value="ECO:0000315"/>
    <property type="project" value="BHF-UCL"/>
</dbReference>
<dbReference type="GO" id="GO:0050919">
    <property type="term" value="P:negative chemotaxis"/>
    <property type="evidence" value="ECO:0007669"/>
    <property type="project" value="Ensembl"/>
</dbReference>
<dbReference type="GO" id="GO:2000536">
    <property type="term" value="P:negative regulation of entry of bacterium into host cell"/>
    <property type="evidence" value="ECO:0000250"/>
    <property type="project" value="BHF-UCL"/>
</dbReference>
<dbReference type="GO" id="GO:2001237">
    <property type="term" value="P:negative regulation of extrinsic apoptotic signaling pathway"/>
    <property type="evidence" value="ECO:0007669"/>
    <property type="project" value="Ensembl"/>
</dbReference>
<dbReference type="GO" id="GO:0010888">
    <property type="term" value="P:negative regulation of lipid storage"/>
    <property type="evidence" value="ECO:0000250"/>
    <property type="project" value="BHF-UCL"/>
</dbReference>
<dbReference type="GO" id="GO:0032369">
    <property type="term" value="P:negative regulation of lipid transport"/>
    <property type="evidence" value="ECO:0000250"/>
    <property type="project" value="BHF-UCL"/>
</dbReference>
<dbReference type="GO" id="GO:0050748">
    <property type="term" value="P:negative regulation of lipoprotein metabolic process"/>
    <property type="evidence" value="ECO:0000250"/>
    <property type="project" value="BHF-UCL"/>
</dbReference>
<dbReference type="GO" id="GO:0010989">
    <property type="term" value="P:negative regulation of low-density lipoprotein particle clearance"/>
    <property type="evidence" value="ECO:0000250"/>
    <property type="project" value="BHF-UCL"/>
</dbReference>
<dbReference type="GO" id="GO:0010745">
    <property type="term" value="P:negative regulation of macrophage derived foam cell differentiation"/>
    <property type="evidence" value="ECO:0000250"/>
    <property type="project" value="BHF-UCL"/>
</dbReference>
<dbReference type="GO" id="GO:0045785">
    <property type="term" value="P:positive regulation of cell adhesion"/>
    <property type="evidence" value="ECO:0000250"/>
    <property type="project" value="BHF-UCL"/>
</dbReference>
<dbReference type="GO" id="GO:0030335">
    <property type="term" value="P:positive regulation of cell migration"/>
    <property type="evidence" value="ECO:0000315"/>
    <property type="project" value="BHF-UCL"/>
</dbReference>
<dbReference type="GO" id="GO:0008284">
    <property type="term" value="P:positive regulation of cell population proliferation"/>
    <property type="evidence" value="ECO:0000250"/>
    <property type="project" value="BHF-UCL"/>
</dbReference>
<dbReference type="GO" id="GO:0007204">
    <property type="term" value="P:positive regulation of cytosolic calcium ion concentration"/>
    <property type="evidence" value="ECO:0007669"/>
    <property type="project" value="Ensembl"/>
</dbReference>
<dbReference type="GO" id="GO:0033690">
    <property type="term" value="P:positive regulation of osteoblast proliferation"/>
    <property type="evidence" value="ECO:0000315"/>
    <property type="project" value="BHF-UCL"/>
</dbReference>
<dbReference type="GO" id="GO:0051057">
    <property type="term" value="P:positive regulation of small GTPase mediated signal transduction"/>
    <property type="evidence" value="ECO:0007669"/>
    <property type="project" value="Ensembl"/>
</dbReference>
<dbReference type="GO" id="GO:0045124">
    <property type="term" value="P:regulation of bone resorption"/>
    <property type="evidence" value="ECO:0000304"/>
    <property type="project" value="BHF-UCL"/>
</dbReference>
<dbReference type="GO" id="GO:0050764">
    <property type="term" value="P:regulation of phagocytosis"/>
    <property type="evidence" value="ECO:0000250"/>
    <property type="project" value="BHF-UCL"/>
</dbReference>
<dbReference type="GO" id="GO:0051209">
    <property type="term" value="P:release of sequestered calcium ion into cytosol"/>
    <property type="evidence" value="ECO:0000304"/>
    <property type="project" value="BHF-UCL"/>
</dbReference>
<dbReference type="GO" id="GO:0071731">
    <property type="term" value="P:response to nitric oxide"/>
    <property type="evidence" value="ECO:0000304"/>
    <property type="project" value="BHF-UCL"/>
</dbReference>
<dbReference type="GO" id="GO:0034446">
    <property type="term" value="P:substrate adhesion-dependent cell spreading"/>
    <property type="evidence" value="ECO:0007669"/>
    <property type="project" value="Ensembl"/>
</dbReference>
<dbReference type="GO" id="GO:0046718">
    <property type="term" value="P:symbiont entry into host cell"/>
    <property type="evidence" value="ECO:0007669"/>
    <property type="project" value="Ensembl"/>
</dbReference>
<dbReference type="GO" id="GO:0042110">
    <property type="term" value="P:T cell activation"/>
    <property type="evidence" value="ECO:0000304"/>
    <property type="project" value="BHF-UCL"/>
</dbReference>
<dbReference type="GO" id="GO:0071604">
    <property type="term" value="P:transforming growth factor beta production"/>
    <property type="evidence" value="ECO:0000314"/>
    <property type="project" value="CAFA"/>
</dbReference>
<dbReference type="GO" id="GO:0060707">
    <property type="term" value="P:trophoblast giant cell differentiation"/>
    <property type="evidence" value="ECO:0000304"/>
    <property type="project" value="BHF-UCL"/>
</dbReference>
<dbReference type="GO" id="GO:0001570">
    <property type="term" value="P:vasculogenesis"/>
    <property type="evidence" value="ECO:0007669"/>
    <property type="project" value="Ensembl"/>
</dbReference>
<dbReference type="GO" id="GO:0035313">
    <property type="term" value="P:wound healing, spreading of epidermal cells"/>
    <property type="evidence" value="ECO:0000303"/>
    <property type="project" value="ComplexPortal"/>
</dbReference>
<dbReference type="FunFam" id="2.130.10.130:FF:000003">
    <property type="entry name" value="Integrin alpha V"/>
    <property type="match status" value="1"/>
</dbReference>
<dbReference type="FunFam" id="2.60.40.1510:FF:000001">
    <property type="entry name" value="Integrin alpha V"/>
    <property type="match status" value="1"/>
</dbReference>
<dbReference type="FunFam" id="2.60.40.1530:FF:000002">
    <property type="entry name" value="integrin alpha-V isoform X2"/>
    <property type="match status" value="1"/>
</dbReference>
<dbReference type="FunFam" id="1.20.5.930:FF:000001">
    <property type="entry name" value="Integrin subunit alpha V"/>
    <property type="match status" value="1"/>
</dbReference>
<dbReference type="FunFam" id="2.60.40.1460:FF:000001">
    <property type="entry name" value="Integrin, alpha V"/>
    <property type="match status" value="1"/>
</dbReference>
<dbReference type="Gene3D" id="1.20.5.930">
    <property type="entry name" value="Bicelle-embedded integrin alpha(iib) transmembrane segment"/>
    <property type="match status" value="1"/>
</dbReference>
<dbReference type="Gene3D" id="2.130.10.130">
    <property type="entry name" value="Integrin alpha, N-terminal"/>
    <property type="match status" value="1"/>
</dbReference>
<dbReference type="Gene3D" id="2.60.40.1460">
    <property type="entry name" value="Integrin domains. Chain A, domain 2"/>
    <property type="match status" value="1"/>
</dbReference>
<dbReference type="Gene3D" id="2.60.40.1510">
    <property type="entry name" value="ntegrin, alpha v. Chain A, domain 3"/>
    <property type="match status" value="1"/>
</dbReference>
<dbReference type="Gene3D" id="2.60.40.1530">
    <property type="entry name" value="ntegrin, alpha v. Chain A, domain 4"/>
    <property type="match status" value="1"/>
</dbReference>
<dbReference type="InterPro" id="IPR013517">
    <property type="entry name" value="FG-GAP"/>
</dbReference>
<dbReference type="InterPro" id="IPR013519">
    <property type="entry name" value="Int_alpha_beta-p"/>
</dbReference>
<dbReference type="InterPro" id="IPR000413">
    <property type="entry name" value="Integrin_alpha"/>
</dbReference>
<dbReference type="InterPro" id="IPR018184">
    <property type="entry name" value="Integrin_alpha_C_CS"/>
</dbReference>
<dbReference type="InterPro" id="IPR013649">
    <property type="entry name" value="Integrin_alpha_Ig-like_1"/>
</dbReference>
<dbReference type="InterPro" id="IPR048285">
    <property type="entry name" value="Integrin_alpha_Ig-like_2"/>
</dbReference>
<dbReference type="InterPro" id="IPR048286">
    <property type="entry name" value="Integrin_alpha_Ig-like_3"/>
</dbReference>
<dbReference type="InterPro" id="IPR028994">
    <property type="entry name" value="Integrin_alpha_N"/>
</dbReference>
<dbReference type="InterPro" id="IPR032695">
    <property type="entry name" value="Integrin_dom_sf"/>
</dbReference>
<dbReference type="PANTHER" id="PTHR23220">
    <property type="entry name" value="INTEGRIN ALPHA"/>
    <property type="match status" value="1"/>
</dbReference>
<dbReference type="PANTHER" id="PTHR23220:SF4">
    <property type="entry name" value="INTEGRIN ALPHA-V"/>
    <property type="match status" value="1"/>
</dbReference>
<dbReference type="Pfam" id="PF01839">
    <property type="entry name" value="FG-GAP"/>
    <property type="match status" value="3"/>
</dbReference>
<dbReference type="Pfam" id="PF08441">
    <property type="entry name" value="Integrin_A_Ig_1"/>
    <property type="match status" value="1"/>
</dbReference>
<dbReference type="Pfam" id="PF20805">
    <property type="entry name" value="Integrin_A_Ig_2"/>
    <property type="match status" value="1"/>
</dbReference>
<dbReference type="Pfam" id="PF20806">
    <property type="entry name" value="Integrin_A_Ig_3"/>
    <property type="match status" value="1"/>
</dbReference>
<dbReference type="Pfam" id="PF00357">
    <property type="entry name" value="Integrin_alpha"/>
    <property type="match status" value="1"/>
</dbReference>
<dbReference type="PRINTS" id="PR01185">
    <property type="entry name" value="INTEGRINA"/>
</dbReference>
<dbReference type="SMART" id="SM00191">
    <property type="entry name" value="Int_alpha"/>
    <property type="match status" value="5"/>
</dbReference>
<dbReference type="SUPFAM" id="SSF69318">
    <property type="entry name" value="Integrin alpha N-terminal domain"/>
    <property type="match status" value="1"/>
</dbReference>
<dbReference type="SUPFAM" id="SSF69179">
    <property type="entry name" value="Integrin domains"/>
    <property type="match status" value="3"/>
</dbReference>
<dbReference type="PROSITE" id="PS51470">
    <property type="entry name" value="FG_GAP"/>
    <property type="match status" value="7"/>
</dbReference>
<dbReference type="PROSITE" id="PS00242">
    <property type="entry name" value="INTEGRIN_ALPHA"/>
    <property type="match status" value="1"/>
</dbReference>
<name>ITAV_MOUSE</name>
<feature type="signal peptide" evidence="1">
    <location>
        <begin position="1"/>
        <end position="30"/>
    </location>
</feature>
<feature type="chain" id="PRO_0000016304" description="Integrin alpha-V">
    <location>
        <begin position="31"/>
        <end position="1044"/>
    </location>
</feature>
<feature type="chain" id="PRO_0000016305" description="Integrin alpha-V heavy chain" evidence="1">
    <location>
        <begin position="31"/>
        <end position="885"/>
    </location>
</feature>
<feature type="chain" id="PRO_0000016306" description="Integrin alpha-V light chain" evidence="1">
    <location>
        <begin position="887"/>
        <end position="1044"/>
    </location>
</feature>
<feature type="topological domain" description="Extracellular" evidence="3">
    <location>
        <begin position="31"/>
        <end position="988"/>
    </location>
</feature>
<feature type="transmembrane region" description="Helical" evidence="3">
    <location>
        <begin position="989"/>
        <end position="1012"/>
    </location>
</feature>
<feature type="topological domain" description="Cytoplasmic" evidence="3">
    <location>
        <begin position="1013"/>
        <end position="1044"/>
    </location>
</feature>
<feature type="repeat" description="FG-GAP 1" evidence="4">
    <location>
        <begin position="32"/>
        <end position="98"/>
    </location>
</feature>
<feature type="repeat" description="FG-GAP 2" evidence="4">
    <location>
        <begin position="109"/>
        <end position="170"/>
    </location>
</feature>
<feature type="repeat" description="FG-GAP 3" evidence="4">
    <location>
        <begin position="173"/>
        <end position="225"/>
    </location>
</feature>
<feature type="repeat" description="FG-GAP 4" evidence="4">
    <location>
        <begin position="237"/>
        <end position="291"/>
    </location>
</feature>
<feature type="repeat" description="FG-GAP 5" evidence="4">
    <location>
        <begin position="292"/>
        <end position="357"/>
    </location>
</feature>
<feature type="repeat" description="FG-GAP 6" evidence="4">
    <location>
        <begin position="358"/>
        <end position="415"/>
    </location>
</feature>
<feature type="repeat" description="FG-GAP 7" evidence="4">
    <location>
        <begin position="419"/>
        <end position="482"/>
    </location>
</feature>
<feature type="region of interest" description="Disordered" evidence="5">
    <location>
        <begin position="1023"/>
        <end position="1044"/>
    </location>
</feature>
<feature type="short sequence motif" description="GFFKR motif">
    <location>
        <begin position="1015"/>
        <end position="1019"/>
    </location>
</feature>
<feature type="compositionally biased region" description="Basic and acidic residues" evidence="5">
    <location>
        <begin position="1023"/>
        <end position="1038"/>
    </location>
</feature>
<feature type="binding site" evidence="2">
    <location>
        <position position="260"/>
    </location>
    <ligand>
        <name>Ca(2+)</name>
        <dbReference type="ChEBI" id="CHEBI:29108"/>
        <label>1</label>
    </ligand>
</feature>
<feature type="binding site" evidence="2">
    <location>
        <position position="262"/>
    </location>
    <ligand>
        <name>Ca(2+)</name>
        <dbReference type="ChEBI" id="CHEBI:29108"/>
        <label>1</label>
    </ligand>
</feature>
<feature type="binding site" evidence="2">
    <location>
        <position position="264"/>
    </location>
    <ligand>
        <name>Ca(2+)</name>
        <dbReference type="ChEBI" id="CHEBI:29108"/>
        <label>1</label>
    </ligand>
</feature>
<feature type="binding site" evidence="2">
    <location>
        <position position="266"/>
    </location>
    <ligand>
        <name>Ca(2+)</name>
        <dbReference type="ChEBI" id="CHEBI:29108"/>
        <label>1</label>
    </ligand>
</feature>
<feature type="binding site" evidence="2">
    <location>
        <position position="268"/>
    </location>
    <ligand>
        <name>Ca(2+)</name>
        <dbReference type="ChEBI" id="CHEBI:29108"/>
        <label>1</label>
    </ligand>
</feature>
<feature type="binding site" evidence="2">
    <location>
        <position position="314"/>
    </location>
    <ligand>
        <name>Ca(2+)</name>
        <dbReference type="ChEBI" id="CHEBI:29108"/>
        <label>2</label>
    </ligand>
</feature>
<feature type="binding site" evidence="2">
    <location>
        <position position="316"/>
    </location>
    <ligand>
        <name>Ca(2+)</name>
        <dbReference type="ChEBI" id="CHEBI:29108"/>
        <label>2</label>
    </ligand>
</feature>
<feature type="binding site" evidence="2">
    <location>
        <position position="318"/>
    </location>
    <ligand>
        <name>Ca(2+)</name>
        <dbReference type="ChEBI" id="CHEBI:29108"/>
        <label>2</label>
    </ligand>
</feature>
<feature type="binding site" evidence="2">
    <location>
        <position position="320"/>
    </location>
    <ligand>
        <name>Ca(2+)</name>
        <dbReference type="ChEBI" id="CHEBI:29108"/>
        <label>2</label>
    </ligand>
</feature>
<feature type="binding site" evidence="2">
    <location>
        <position position="322"/>
    </location>
    <ligand>
        <name>Ca(2+)</name>
        <dbReference type="ChEBI" id="CHEBI:29108"/>
        <label>2</label>
    </ligand>
</feature>
<feature type="binding site" evidence="2">
    <location>
        <position position="379"/>
    </location>
    <ligand>
        <name>Ca(2+)</name>
        <dbReference type="ChEBI" id="CHEBI:29108"/>
        <label>3</label>
    </ligand>
</feature>
<feature type="binding site" evidence="2">
    <location>
        <position position="381"/>
    </location>
    <ligand>
        <name>Ca(2+)</name>
        <dbReference type="ChEBI" id="CHEBI:29108"/>
        <label>3</label>
    </ligand>
</feature>
<feature type="binding site" evidence="2">
    <location>
        <position position="383"/>
    </location>
    <ligand>
        <name>Ca(2+)</name>
        <dbReference type="ChEBI" id="CHEBI:29108"/>
        <label>3</label>
    </ligand>
</feature>
<feature type="binding site" evidence="2">
    <location>
        <position position="385"/>
    </location>
    <ligand>
        <name>Ca(2+)</name>
        <dbReference type="ChEBI" id="CHEBI:29108"/>
        <label>3</label>
    </ligand>
</feature>
<feature type="binding site" evidence="2">
    <location>
        <position position="387"/>
    </location>
    <ligand>
        <name>Ca(2+)</name>
        <dbReference type="ChEBI" id="CHEBI:29108"/>
        <label>3</label>
    </ligand>
</feature>
<feature type="binding site" evidence="2">
    <location>
        <position position="443"/>
    </location>
    <ligand>
        <name>Ca(2+)</name>
        <dbReference type="ChEBI" id="CHEBI:29108"/>
        <label>4</label>
    </ligand>
</feature>
<feature type="binding site" evidence="2">
    <location>
        <position position="445"/>
    </location>
    <ligand>
        <name>Ca(2+)</name>
        <dbReference type="ChEBI" id="CHEBI:29108"/>
        <label>4</label>
    </ligand>
</feature>
<feature type="binding site" evidence="2">
    <location>
        <position position="447"/>
    </location>
    <ligand>
        <name>Ca(2+)</name>
        <dbReference type="ChEBI" id="CHEBI:29108"/>
        <label>4</label>
    </ligand>
</feature>
<feature type="binding site" evidence="2">
    <location>
        <position position="449"/>
    </location>
    <ligand>
        <name>Ca(2+)</name>
        <dbReference type="ChEBI" id="CHEBI:29108"/>
        <label>4</label>
    </ligand>
</feature>
<feature type="binding site" evidence="2">
    <location>
        <position position="451"/>
    </location>
    <ligand>
        <name>Ca(2+)</name>
        <dbReference type="ChEBI" id="CHEBI:29108"/>
        <label>4</label>
    </ligand>
</feature>
<feature type="glycosylation site" description="N-linked (GlcNAc...) asparagine" evidence="9 10">
    <location>
        <position position="74"/>
    </location>
</feature>
<feature type="glycosylation site" description="N-linked (GlcNAc...) asparagine" evidence="3">
    <location>
        <position position="290"/>
    </location>
</feature>
<feature type="glycosylation site" description="N-linked (GlcNAc...) asparagine" evidence="3">
    <location>
        <position position="296"/>
    </location>
</feature>
<feature type="glycosylation site" description="N-linked (GlcNAc...) asparagine" evidence="9 10">
    <location>
        <position position="615"/>
    </location>
</feature>
<feature type="glycosylation site" description="N-linked (GlcNAc...) asparagine" evidence="3">
    <location>
        <position position="704"/>
    </location>
</feature>
<feature type="glycosylation site" description="N-linked (GlcNAc...) asparagine" evidence="3">
    <location>
        <position position="835"/>
    </location>
</feature>
<feature type="glycosylation site" description="N-linked (GlcNAc...) asparagine" evidence="3">
    <location>
        <position position="851"/>
    </location>
</feature>
<feature type="glycosylation site" description="N-linked (GlcNAc...) asparagine" evidence="9 10">
    <location>
        <position position="869"/>
    </location>
</feature>
<feature type="glycosylation site" description="N-linked (GlcNAc...) asparagine" evidence="10">
    <location>
        <position position="941"/>
    </location>
</feature>
<feature type="glycosylation site" description="N-linked (GlcNAc...) asparagine" evidence="3">
    <location>
        <position position="969"/>
    </location>
</feature>
<feature type="glycosylation site" description="N-linked (GlcNAc...) asparagine" evidence="3">
    <location>
        <position position="976"/>
    </location>
</feature>
<feature type="disulfide bond" evidence="2">
    <location>
        <begin position="89"/>
        <end position="97"/>
    </location>
</feature>
<feature type="disulfide bond" evidence="2">
    <location>
        <begin position="138"/>
        <end position="158"/>
    </location>
</feature>
<feature type="disulfide bond" evidence="2">
    <location>
        <begin position="172"/>
        <end position="185"/>
    </location>
</feature>
<feature type="disulfide bond" evidence="2">
    <location>
        <begin position="491"/>
        <end position="502"/>
    </location>
</feature>
<feature type="disulfide bond" evidence="2">
    <location>
        <begin position="508"/>
        <end position="565"/>
    </location>
</feature>
<feature type="disulfide bond" evidence="2">
    <location>
        <begin position="626"/>
        <end position="632"/>
    </location>
</feature>
<feature type="disulfide bond" evidence="2">
    <location>
        <begin position="698"/>
        <end position="711"/>
    </location>
</feature>
<feature type="disulfide bond" description="Interchain (between heavy and light chains)" evidence="2">
    <location>
        <begin position="852"/>
        <end position="910"/>
    </location>
</feature>
<feature type="disulfide bond" evidence="2">
    <location>
        <begin position="900"/>
        <end position="905"/>
    </location>
</feature>
<feature type="sequence conflict" description="In Ref. 1; AAC52497." evidence="15" ref="1">
    <original>EL</original>
    <variation>DV</variation>
    <location>
        <begin position="526"/>
        <end position="527"/>
    </location>
</feature>
<feature type="sequence conflict" description="In Ref. 1; AAC52497." evidence="15" ref="1">
    <original>VL</original>
    <variation>EK</variation>
    <location>
        <begin position="768"/>
        <end position="769"/>
    </location>
</feature>
<feature type="sequence conflict" description="In Ref. 1; AAC52497." evidence="15" ref="1">
    <original>A</original>
    <variation>G</variation>
    <location>
        <position position="872"/>
    </location>
</feature>
<feature type="sequence conflict" description="In Ref. 1; AAC52497." evidence="15" ref="1">
    <original>N</original>
    <variation>S</variation>
    <location>
        <position position="880"/>
    </location>
</feature>
<feature type="sequence conflict" description="In Ref. 1; AAC52497." evidence="15" ref="1">
    <original>D</original>
    <variation>G</variation>
    <location>
        <position position="887"/>
    </location>
</feature>
<keyword id="KW-0037">Angiogenesis</keyword>
<keyword id="KW-0106">Calcium</keyword>
<keyword id="KW-0130">Cell adhesion</keyword>
<keyword id="KW-0965">Cell junction</keyword>
<keyword id="KW-1003">Cell membrane</keyword>
<keyword id="KW-0165">Cleavage on pair of basic residues</keyword>
<keyword id="KW-0217">Developmental protein</keyword>
<keyword id="KW-0221">Differentiation</keyword>
<keyword id="KW-1015">Disulfide bond</keyword>
<keyword id="KW-0325">Glycoprotein</keyword>
<keyword id="KW-0401">Integrin</keyword>
<keyword id="KW-0472">Membrane</keyword>
<keyword id="KW-0479">Metal-binding</keyword>
<keyword id="KW-0675">Receptor</keyword>
<keyword id="KW-1185">Reference proteome</keyword>
<keyword id="KW-0677">Repeat</keyword>
<keyword id="KW-0732">Signal</keyword>
<keyword id="KW-0812">Transmembrane</keyword>
<keyword id="KW-1133">Transmembrane helix</keyword>
<proteinExistence type="evidence at protein level"/>
<organism>
    <name type="scientific">Mus musculus</name>
    <name type="common">Mouse</name>
    <dbReference type="NCBI Taxonomy" id="10090"/>
    <lineage>
        <taxon>Eukaryota</taxon>
        <taxon>Metazoa</taxon>
        <taxon>Chordata</taxon>
        <taxon>Craniata</taxon>
        <taxon>Vertebrata</taxon>
        <taxon>Euteleostomi</taxon>
        <taxon>Mammalia</taxon>
        <taxon>Eutheria</taxon>
        <taxon>Euarchontoglires</taxon>
        <taxon>Glires</taxon>
        <taxon>Rodentia</taxon>
        <taxon>Myomorpha</taxon>
        <taxon>Muroidea</taxon>
        <taxon>Muridae</taxon>
        <taxon>Murinae</taxon>
        <taxon>Mus</taxon>
        <taxon>Mus</taxon>
    </lineage>
</organism>
<reference key="1">
    <citation type="journal article" date="1996" name="J. Cell Biol.">
        <title>Cloning of mouse integrin alphaV cDNA and role of the alphaV-related matrix receptors in metanephric development.</title>
        <authorList>
            <person name="Wada J."/>
            <person name="Kumar A."/>
            <person name="Liu Z."/>
            <person name="Ruoslahti E."/>
            <person name="Reichardt L."/>
            <person name="Marvaldi J."/>
            <person name="Kanwar Y.S."/>
        </authorList>
    </citation>
    <scope>NUCLEOTIDE SEQUENCE [MRNA]</scope>
    <source>
        <strain>CD-1</strain>
        <tissue>Kidney</tissue>
    </source>
</reference>
<reference key="2">
    <citation type="journal article" date="2009" name="PLoS Biol.">
        <title>Lineage-specific biology revealed by a finished genome assembly of the mouse.</title>
        <authorList>
            <person name="Church D.M."/>
            <person name="Goodstadt L."/>
            <person name="Hillier L.W."/>
            <person name="Zody M.C."/>
            <person name="Goldstein S."/>
            <person name="She X."/>
            <person name="Bult C.J."/>
            <person name="Agarwala R."/>
            <person name="Cherry J.L."/>
            <person name="DiCuccio M."/>
            <person name="Hlavina W."/>
            <person name="Kapustin Y."/>
            <person name="Meric P."/>
            <person name="Maglott D."/>
            <person name="Birtle Z."/>
            <person name="Marques A.C."/>
            <person name="Graves T."/>
            <person name="Zhou S."/>
            <person name="Teague B."/>
            <person name="Potamousis K."/>
            <person name="Churas C."/>
            <person name="Place M."/>
            <person name="Herschleb J."/>
            <person name="Runnheim R."/>
            <person name="Forrest D."/>
            <person name="Amos-Landgraf J."/>
            <person name="Schwartz D.C."/>
            <person name="Cheng Z."/>
            <person name="Lindblad-Toh K."/>
            <person name="Eichler E.E."/>
            <person name="Ponting C.P."/>
        </authorList>
    </citation>
    <scope>NUCLEOTIDE SEQUENCE [LARGE SCALE GENOMIC DNA]</scope>
    <source>
        <strain>C57BL/6J</strain>
    </source>
</reference>
<reference key="3">
    <citation type="journal article" date="1998" name="Cell">
        <title>Extensive vasculogenesis, angiogenesis, and organogenesis precede lethality in mice lacking all alpha v integrins.</title>
        <authorList>
            <person name="Bader B.L."/>
            <person name="Rayburn H."/>
            <person name="Crowley D."/>
            <person name="Hynes R.O."/>
        </authorList>
    </citation>
    <scope>FUNCTION</scope>
    <scope>DISRUPTION PHENOTYPE</scope>
</reference>
<reference key="4">
    <citation type="journal article" date="1999" name="Cell">
        <title>The integrin alpha v beta 6 binds and activates latent TGF beta 1: a mechanism for regulating pulmonary inflammation and fibrosis.</title>
        <authorList>
            <person name="Munger J.S."/>
            <person name="Huang X."/>
            <person name="Kawakatsu H."/>
            <person name="Griffiths M.J."/>
            <person name="Dalton S.L."/>
            <person name="Wu J."/>
            <person name="Pittet J.F."/>
            <person name="Kaminski N."/>
            <person name="Garat C."/>
            <person name="Matthay M.A."/>
            <person name="Rifkin D.B."/>
            <person name="Sheppard D."/>
        </authorList>
    </citation>
    <scope>FUNCTION</scope>
</reference>
<reference key="5">
    <citation type="journal article" date="2001" name="Nat. Immunol.">
        <title>gp49B1-alpha(v)beta3 interaction inhibits antigen-induced mast cell activation.</title>
        <authorList>
            <person name="Castells M.C."/>
            <person name="Klickstein L.B."/>
            <person name="Hassani K."/>
            <person name="Cumplido J.A."/>
            <person name="Lacouture M.E."/>
            <person name="Austen K.F."/>
            <person name="Katz H.R."/>
        </authorList>
    </citation>
    <scope>FUNCTION</scope>
</reference>
<reference key="6">
    <citation type="journal article" date="2002" name="Nature">
        <title>Fibulin-5/DANCE is essential for elastogenesis in vivo.</title>
        <authorList>
            <person name="Nakamura T."/>
            <person name="Lozano P.R."/>
            <person name="Ikeda Y."/>
            <person name="Iwanaga Y."/>
            <person name="Hinek A."/>
            <person name="Minamisawa S."/>
            <person name="Cheng C.F."/>
            <person name="Kobuke K."/>
            <person name="Dalton N."/>
            <person name="Takada Y."/>
            <person name="Tashiro K."/>
            <person name="Ross J."/>
            <person name="Honjo T."/>
            <person name="Chien K.R."/>
        </authorList>
    </citation>
    <scope>INTERACTION WITH FBLN5</scope>
</reference>
<reference key="7">
    <citation type="journal article" date="2009" name="Mol. Cell. Proteomics">
        <title>The mouse C2C12 myoblast cell surface N-linked glycoproteome: identification, glycosite occupancy, and membrane orientation.</title>
        <authorList>
            <person name="Gundry R.L."/>
            <person name="Raginski K."/>
            <person name="Tarasova Y."/>
            <person name="Tchernyshyov I."/>
            <person name="Bausch-Fluck D."/>
            <person name="Elliott S.T."/>
            <person name="Boheler K.R."/>
            <person name="Van Eyk J.E."/>
            <person name="Wollscheid B."/>
        </authorList>
    </citation>
    <scope>GLYCOSYLATION [LARGE SCALE ANALYSIS] AT ASN-74; ASN-615; ASN-869 AND ASN-941</scope>
    <source>
        <tissue>Myoblast</tissue>
    </source>
</reference>
<reference key="8">
    <citation type="journal article" date="2009" name="Nat. Biotechnol.">
        <title>Mass-spectrometric identification and relative quantification of N-linked cell surface glycoproteins.</title>
        <authorList>
            <person name="Wollscheid B."/>
            <person name="Bausch-Fluck D."/>
            <person name="Henderson C."/>
            <person name="O'Brien R."/>
            <person name="Bibel M."/>
            <person name="Schiess R."/>
            <person name="Aebersold R."/>
            <person name="Watts J.D."/>
        </authorList>
    </citation>
    <scope>GLYCOSYLATION [LARGE SCALE ANALYSIS] AT ASN-74; ASN-615 AND ASN-869</scope>
</reference>
<reference key="9">
    <citation type="journal article" date="2010" name="Cell">
        <title>A tissue-specific atlas of mouse protein phosphorylation and expression.</title>
        <authorList>
            <person name="Huttlin E.L."/>
            <person name="Jedrychowski M.P."/>
            <person name="Elias J.E."/>
            <person name="Goswami T."/>
            <person name="Rad R."/>
            <person name="Beausoleil S.A."/>
            <person name="Villen J."/>
            <person name="Haas W."/>
            <person name="Sowa M.E."/>
            <person name="Gygi S.P."/>
        </authorList>
    </citation>
    <scope>IDENTIFICATION BY MASS SPECTROMETRY [LARGE SCALE ANALYSIS]</scope>
    <source>
        <tissue>Brain</tissue>
        <tissue>Brown adipose tissue</tissue>
        <tissue>Heart</tissue>
        <tissue>Kidney</tissue>
        <tissue>Liver</tissue>
        <tissue>Lung</tissue>
        <tissue>Pancreas</tissue>
        <tissue>Spleen</tissue>
        <tissue>Testis</tissue>
    </source>
</reference>
<reference key="10">
    <citation type="journal article" date="2014" name="J. Immunol.">
        <title>gp49B-mediated negative regulation of antibody production by memory and marginal zone B cells.</title>
        <authorList>
            <person name="Fukao S."/>
            <person name="Haniuda K."/>
            <person name="Nojima T."/>
            <person name="Takai T."/>
            <person name="Kitamura D."/>
        </authorList>
    </citation>
    <scope>FUNCTION</scope>
</reference>
<reference key="11">
    <citation type="journal article" date="2014" name="J. Immunol.">
        <title>Release of active TGF-beta1 from the latent TGF-beta1/GARP complex on T regulatory cells is mediated by integrin beta8.</title>
        <authorList>
            <person name="Edwards J.P."/>
            <person name="Thornton A.M."/>
            <person name="Shevach E.M."/>
        </authorList>
    </citation>
    <scope>FUNCTION</scope>
</reference>
<reference key="12">
    <citation type="journal article" date="2024" name="Metabolism">
        <title>Tm4sf19 deficiency inhibits osteoclast multinucleation and prevents bone loss.</title>
        <authorList>
            <person name="Park S."/>
            <person name="Heo J.S."/>
            <person name="Mizuno S."/>
            <person name="Kim M."/>
            <person name="An H."/>
            <person name="Hong E."/>
            <person name="Kang M.G."/>
            <person name="Kim J."/>
            <person name="Yun R."/>
            <person name="Park H."/>
            <person name="Noh E.H."/>
            <person name="Lee M.J."/>
            <person name="Yoon K."/>
            <person name="Kim P."/>
            <person name="Son M."/>
            <person name="Pang K."/>
            <person name="Lee J."/>
            <person name="Park J."/>
            <person name="Ooshima A."/>
            <person name="Kim T.J."/>
            <person name="Park J.Y."/>
            <person name="Yang K.M."/>
            <person name="Myung S.J."/>
            <person name="Bae H."/>
            <person name="Lee K.M."/>
            <person name="Letterio J."/>
            <person name="Park S.H."/>
            <person name="Takahashi S."/>
            <person name="Kim S.J."/>
        </authorList>
    </citation>
    <scope>INTERACTION WITH TM4SF19</scope>
</reference>
<evidence type="ECO:0000250" key="1"/>
<evidence type="ECO:0000250" key="2">
    <source>
        <dbReference type="UniProtKB" id="P06756"/>
    </source>
</evidence>
<evidence type="ECO:0000255" key="3"/>
<evidence type="ECO:0000255" key="4">
    <source>
        <dbReference type="PROSITE-ProRule" id="PRU00803"/>
    </source>
</evidence>
<evidence type="ECO:0000256" key="5">
    <source>
        <dbReference type="SAM" id="MobiDB-lite"/>
    </source>
</evidence>
<evidence type="ECO:0000269" key="6">
    <source>
    </source>
</evidence>
<evidence type="ECO:0000269" key="7">
    <source>
    </source>
</evidence>
<evidence type="ECO:0000269" key="8">
    <source>
    </source>
</evidence>
<evidence type="ECO:0000269" key="9">
    <source>
    </source>
</evidence>
<evidence type="ECO:0000269" key="10">
    <source>
    </source>
</evidence>
<evidence type="ECO:0000269" key="11">
    <source>
    </source>
</evidence>
<evidence type="ECO:0000269" key="12">
    <source>
    </source>
</evidence>
<evidence type="ECO:0000269" key="13">
    <source>
    </source>
</evidence>
<evidence type="ECO:0000269" key="14">
    <source>
    </source>
</evidence>
<evidence type="ECO:0000305" key="15"/>
<evidence type="ECO:0000305" key="16">
    <source>
    </source>
</evidence>
<protein>
    <recommendedName>
        <fullName>Integrin alpha-V</fullName>
    </recommendedName>
    <alternativeName>
        <fullName>Vitronectin receptor subunit alpha</fullName>
    </alternativeName>
    <cdAntigenName>CD51</cdAntigenName>
    <component>
        <recommendedName>
            <fullName>Integrin alpha-V heavy chain</fullName>
        </recommendedName>
    </component>
    <component>
        <recommendedName>
            <fullName>Integrin alpha-V light chain</fullName>
        </recommendedName>
    </component>
</protein>
<accession>P43406</accession>
<accession>A2AKI6</accession>
<gene>
    <name type="primary">Itgav</name>
</gene>
<comment type="function">
    <text evidence="2 6 7 11 12 14">The alpha-V (ITGAV) integrins are receptors for vitronectin, cytotactin, fibronectin, fibrinogen, laminin, matrix metalloproteinase-2, osteopontin, osteomodulin, prothrombin, thrombospondin, TGFB1 and vWF (PubMed:10025398, PubMed:9827803). They recognize the sequence R-G-D in a wide array of ligands. Alpha-V integrins may play a role in embryo implantation, angiogenesis and wound healing (PubMed:9827803). ITGAV:ITGB3 binds to fractalkine (CX3CL1) and may act as its coreceptor in CX3CR1-dependent fractalkine signaling (By similarity). ITGAV:ITGB3 binds to NRG1 (via EGF domain) and this binding is essential for NRG1-ERBB signaling. ITGAV:ITGB3 binds to FGF1 and this binding is essential for FGF1 signaling (By similarity). ITGAV:ITGB3 binds to FGF2 and this binding is essential for FGF2 signaling (By similarity). ITGAV:ITGB3 binds to IGF1 and this binding is essential for IGF1 signaling (By similarity). ITGAV:ITGB3 binds to IGF2 and this binding is essential for IGF2 signaling (By similarity). ITGAV:ITGB3 binds to IL1B and this binding is essential for IL1B signaling (By similarity). ITGAV:ITGB3 binds to PLA2G2A via a site (site 2) which is distinct from the classical ligand-binding site (site 1) and this induces integrin conformational changes and enhanced ligand binding to site 1 (By similarity). ITGAV:ITGB3 and ITGAV:ITGB6 act as a receptor for fibrillin-1 (FBN1) and mediate R-G-D-dependent cell adhesion to FBN1 (By similarity). Integrin alpha-V/beta-6 or alpha-V/beta-8 (ITGAV:ITGB6 or ITGAV:ITGB8) mediates R-G-D-dependent release of transforming growth factor beta-1 (TGF-beta-1) from regulatory Latency-associated peptide (LAP), thereby playing a key role in TGF-beta-1 activation (PubMed:10025398, PubMed:25127859). ITGAV:ITGB3 acts as a receptor for CD40LG (By similarity). ITGAV:ITGB3 binds to the Lilrb4a/Gp49b receptor and enhances the Lilrb4a-mediated inhibition of mast cell activation (PubMed:11323698). ITGAV:ITGB3 also suppresses marginal zone B cell antibody production through its interaction with Lilrb4a (PubMed:24935931). ITGAV:ITGB3 acts as a receptor for IBSP and promotes cell adhesion and migration to IBSP (By similarity).</text>
</comment>
<comment type="subunit">
    <text evidence="2 6 8 13 16">Heterodimer of an alpha and a beta subunit. The alpha subunit is composed of a heavy and a light chain linked by a disulfide bond. Alpha-V (ITGAV) associates with either beta-1 (ITGB1), beta-3 (ITGB3), beta-5 (ITGB5), beta-6 (ITGB6) or beta-8 (ITGB8) (Probable). Interacts with RAB25. Interacts with CIB1 (By similarity). Integrins ITGAV:ITGB3 and ITGAV:ITGB5 interact with FBLN5 (via N-terminus) (PubMed:11805835). ITGAV:ITGB3 and ITGAV:ITGB5 interact with CCN3 (By similarity). ITGAV:ITGB3 interacts with ADGRA2 (By similarity). ITGAV:ITGB3 interacts with FGF2; it is likely that FGF2 can simultaneously bind ITGAV:ITGB3 and FGF receptors (By similarity). ITGAV:ITGB3 interacts with SELP (via C-type lectin domain); the interaction mediates cell-cell interaction and adhesion (By similarity). ITGAV:ITGB3 is found in a ternary complex with CX3CR1 and CX3CL1. ITGAV:ITGB3 is found in a ternary complex with NRG1 and ERBB3. ITGAV:ITGB3 is found in a ternary complex with FGF1 and FGFR1. ITGAV:ITGB3 is found in a ternary complex with IGF1 and IGF1R (By similarity). ITGAV:ITGB3 interacts with IGF2 (By similarity). ITGAV:ITGB3 and ITGAV:ITGB6 interact with FBN1 (By similarity). ITGAV:ITGB3 interacts with CD9, CD81 and CD151 (via second extracellular domain) (By similarity). ITGAV:ITGB6 interacts with TGFB1 (PubMed:10025398). ITGAV:ITGB3 interacts with PTN. Forms a complex with PTPRZ1 and PTN that stimulates endothelial cell migration through ITGB3 'Tyr-773' phosphorylation (By similarity). Interacts with TM4SF19 (PubMed:38016540).</text>
</comment>
<comment type="subcellular location">
    <subcellularLocation>
        <location>Cell membrane</location>
        <topology>Single-pass type I membrane protein</topology>
    </subcellularLocation>
    <subcellularLocation>
        <location evidence="2">Cell junction</location>
        <location evidence="2">Focal adhesion</location>
    </subcellularLocation>
</comment>
<comment type="disruption phenotype">
    <text evidence="14">Mice expressing a null mutation of the alpha-V subunit gene survive until late in embryonic development and occasionally even to birth. They demonstrate cleft palate, and defective development of CNS and gastrointestinal blood vessels.</text>
</comment>
<comment type="similarity">
    <text evidence="15">Belongs to the integrin alpha chain family.</text>
</comment>